<comment type="function">
    <text evidence="2">Guanine nucleotide exchange factor (GEF) which may activate RAB9A and RAB9B. Promotes the exchange of GDP to GTP, converting inactive GDP-bound Rab proteins into their active GTP-bound form.</text>
</comment>
<comment type="interaction">
    <interactant intactId="EBI-10307465">
        <id>Q9H6A0</id>
    </interactant>
    <interactant intactId="EBI-10175124">
        <id>Q8IZU0</id>
        <label>FAM9B</label>
    </interactant>
    <organismsDiffer>false</organismsDiffer>
    <experiments>3</experiments>
</comment>
<comment type="interaction">
    <interactant intactId="EBI-10307465">
        <id>Q9H6A0</id>
    </interactant>
    <interactant intactId="EBI-354932">
        <id>P38646</id>
        <label>HSPA9</label>
    </interactant>
    <organismsDiffer>false</organismsDiffer>
    <experiments>3</experiments>
</comment>
<comment type="subcellular location">
    <subcellularLocation>
        <location evidence="3">Cytoplasm</location>
    </subcellularLocation>
</comment>
<comment type="alternative products">
    <event type="alternative splicing"/>
    <isoform>
        <id>Q9H6A0-1</id>
        <name>1</name>
        <sequence type="displayed"/>
    </isoform>
    <isoform>
        <id>Q9H6A0-2</id>
        <name>2</name>
        <sequence type="described" ref="VSP_019471"/>
    </isoform>
</comment>
<comment type="tissue specificity">
    <text evidence="3">In bronchial mucosa, mainly expressed in ciliated and basal epithelial cells and weakly in alveolar cells (at protein level). Tends to be down-regulated in lung cancers, immortalized bronchial epithelial cell lines and precancerous lesions.</text>
</comment>
<gene>
    <name type="primary">DENND2D</name>
</gene>
<dbReference type="EMBL" id="AK026110">
    <property type="protein sequence ID" value="BAB15363.1"/>
    <property type="molecule type" value="mRNA"/>
</dbReference>
<dbReference type="EMBL" id="AL355816">
    <property type="status" value="NOT_ANNOTATED_CDS"/>
    <property type="molecule type" value="Genomic_DNA"/>
</dbReference>
<dbReference type="EMBL" id="BC004557">
    <property type="protein sequence ID" value="AAH04557.1"/>
    <property type="molecule type" value="mRNA"/>
</dbReference>
<dbReference type="CCDS" id="CCDS60219.1">
    <molecule id="Q9H6A0-2"/>
</dbReference>
<dbReference type="CCDS" id="CCDS831.1">
    <molecule id="Q9H6A0-1"/>
</dbReference>
<dbReference type="RefSeq" id="NP_001258762.1">
    <molecule id="Q9H6A0-2"/>
    <property type="nucleotide sequence ID" value="NM_001271833.2"/>
</dbReference>
<dbReference type="RefSeq" id="NP_079177.2">
    <molecule id="Q9H6A0-1"/>
    <property type="nucleotide sequence ID" value="NM_024901.4"/>
</dbReference>
<dbReference type="SMR" id="Q9H6A0"/>
<dbReference type="BioGRID" id="123030">
    <property type="interactions" value="36"/>
</dbReference>
<dbReference type="FunCoup" id="Q9H6A0">
    <property type="interactions" value="862"/>
</dbReference>
<dbReference type="IntAct" id="Q9H6A0">
    <property type="interactions" value="26"/>
</dbReference>
<dbReference type="STRING" id="9606.ENSP00000350266"/>
<dbReference type="iPTMnet" id="Q9H6A0"/>
<dbReference type="PhosphoSitePlus" id="Q9H6A0"/>
<dbReference type="BioMuta" id="DENND2D"/>
<dbReference type="DMDM" id="109825794"/>
<dbReference type="jPOST" id="Q9H6A0"/>
<dbReference type="MassIVE" id="Q9H6A0"/>
<dbReference type="PaxDb" id="9606-ENSP00000350266"/>
<dbReference type="PeptideAtlas" id="Q9H6A0"/>
<dbReference type="ProteomicsDB" id="80967">
    <molecule id="Q9H6A0-1"/>
</dbReference>
<dbReference type="ProteomicsDB" id="80968">
    <molecule id="Q9H6A0-2"/>
</dbReference>
<dbReference type="Antibodypedia" id="53750">
    <property type="antibodies" value="73 antibodies from 12 providers"/>
</dbReference>
<dbReference type="DNASU" id="79961"/>
<dbReference type="Ensembl" id="ENST00000357640.9">
    <molecule id="Q9H6A0-1"/>
    <property type="protein sequence ID" value="ENSP00000350266.4"/>
    <property type="gene ID" value="ENSG00000162777.17"/>
</dbReference>
<dbReference type="Ensembl" id="ENST00000369752.5">
    <molecule id="Q9H6A0-2"/>
    <property type="protein sequence ID" value="ENSP00000358767.5"/>
    <property type="gene ID" value="ENSG00000162777.17"/>
</dbReference>
<dbReference type="GeneID" id="79961"/>
<dbReference type="KEGG" id="hsa:79961"/>
<dbReference type="MANE-Select" id="ENST00000357640.9">
    <property type="protein sequence ID" value="ENSP00000350266.4"/>
    <property type="RefSeq nucleotide sequence ID" value="NM_024901.5"/>
    <property type="RefSeq protein sequence ID" value="NP_079177.2"/>
</dbReference>
<dbReference type="UCSC" id="uc001eak.3">
    <molecule id="Q9H6A0-1"/>
    <property type="organism name" value="human"/>
</dbReference>
<dbReference type="AGR" id="HGNC:26192"/>
<dbReference type="CTD" id="79961"/>
<dbReference type="DisGeNET" id="79961"/>
<dbReference type="GeneCards" id="DENND2D"/>
<dbReference type="HGNC" id="HGNC:26192">
    <property type="gene designation" value="DENND2D"/>
</dbReference>
<dbReference type="HPA" id="ENSG00000162777">
    <property type="expression patterns" value="Tissue enhanced (lymphoid)"/>
</dbReference>
<dbReference type="MIM" id="615111">
    <property type="type" value="gene"/>
</dbReference>
<dbReference type="neXtProt" id="NX_Q9H6A0"/>
<dbReference type="OpenTargets" id="ENSG00000162777"/>
<dbReference type="PharmGKB" id="PA142671986"/>
<dbReference type="VEuPathDB" id="HostDB:ENSG00000162777"/>
<dbReference type="eggNOG" id="KOG3569">
    <property type="taxonomic scope" value="Eukaryota"/>
</dbReference>
<dbReference type="GeneTree" id="ENSGT00950000182931"/>
<dbReference type="HOGENOM" id="CLU_008196_5_1_1"/>
<dbReference type="InParanoid" id="Q9H6A0"/>
<dbReference type="OMA" id="SEEFNTH"/>
<dbReference type="OrthoDB" id="10266080at2759"/>
<dbReference type="PAN-GO" id="Q9H6A0">
    <property type="GO annotations" value="2 GO annotations based on evolutionary models"/>
</dbReference>
<dbReference type="PhylomeDB" id="Q9H6A0"/>
<dbReference type="TreeFam" id="TF320336"/>
<dbReference type="PathwayCommons" id="Q9H6A0"/>
<dbReference type="Reactome" id="R-HSA-8876198">
    <property type="pathway name" value="RAB GEFs exchange GTP for GDP on RABs"/>
</dbReference>
<dbReference type="SignaLink" id="Q9H6A0"/>
<dbReference type="BioGRID-ORCS" id="79961">
    <property type="hits" value="20 hits in 1144 CRISPR screens"/>
</dbReference>
<dbReference type="ChiTaRS" id="DENND2D">
    <property type="organism name" value="human"/>
</dbReference>
<dbReference type="GenomeRNAi" id="79961"/>
<dbReference type="Pharos" id="Q9H6A0">
    <property type="development level" value="Tbio"/>
</dbReference>
<dbReference type="PRO" id="PR:Q9H6A0"/>
<dbReference type="Proteomes" id="UP000005640">
    <property type="component" value="Chromosome 1"/>
</dbReference>
<dbReference type="RNAct" id="Q9H6A0">
    <property type="molecule type" value="protein"/>
</dbReference>
<dbReference type="Bgee" id="ENSG00000162777">
    <property type="expression patterns" value="Expressed in granulocyte and 151 other cell types or tissues"/>
</dbReference>
<dbReference type="ExpressionAtlas" id="Q9H6A0">
    <property type="expression patterns" value="baseline and differential"/>
</dbReference>
<dbReference type="GO" id="GO:0005829">
    <property type="term" value="C:cytosol"/>
    <property type="evidence" value="ECO:0000314"/>
    <property type="project" value="HPA"/>
</dbReference>
<dbReference type="GO" id="GO:0005654">
    <property type="term" value="C:nucleoplasm"/>
    <property type="evidence" value="ECO:0000314"/>
    <property type="project" value="HPA"/>
</dbReference>
<dbReference type="GO" id="GO:0005085">
    <property type="term" value="F:guanyl-nucleotide exchange factor activity"/>
    <property type="evidence" value="ECO:0000314"/>
    <property type="project" value="UniProtKB"/>
</dbReference>
<dbReference type="FunFam" id="3.30.450.200:FF:000001">
    <property type="entry name" value="DENN domain-containing protein 2A isoform X1"/>
    <property type="match status" value="1"/>
</dbReference>
<dbReference type="FunFam" id="3.40.50.11500:FF:000004">
    <property type="entry name" value="DENN domain-containing protein 2C isoform X1"/>
    <property type="match status" value="1"/>
</dbReference>
<dbReference type="Gene3D" id="3.30.450.200">
    <property type="match status" value="1"/>
</dbReference>
<dbReference type="Gene3D" id="3.40.50.11500">
    <property type="match status" value="1"/>
</dbReference>
<dbReference type="InterPro" id="IPR001194">
    <property type="entry name" value="cDENN_dom"/>
</dbReference>
<dbReference type="InterPro" id="IPR005112">
    <property type="entry name" value="dDENN_dom"/>
</dbReference>
<dbReference type="InterPro" id="IPR043153">
    <property type="entry name" value="DENN_C"/>
</dbReference>
<dbReference type="InterPro" id="IPR051942">
    <property type="entry name" value="DENN_domain_containing_2"/>
</dbReference>
<dbReference type="InterPro" id="IPR037516">
    <property type="entry name" value="Tripartite_DENN"/>
</dbReference>
<dbReference type="InterPro" id="IPR005113">
    <property type="entry name" value="uDENN_dom"/>
</dbReference>
<dbReference type="PANTHER" id="PTHR15288">
    <property type="entry name" value="DENN DOMAIN-CONTAINING PROTEIN 2"/>
    <property type="match status" value="1"/>
</dbReference>
<dbReference type="PANTHER" id="PTHR15288:SF2">
    <property type="entry name" value="DENN DOMAIN-CONTAINING PROTEIN 2D"/>
    <property type="match status" value="1"/>
</dbReference>
<dbReference type="Pfam" id="PF03455">
    <property type="entry name" value="dDENN"/>
    <property type="match status" value="1"/>
</dbReference>
<dbReference type="Pfam" id="PF02141">
    <property type="entry name" value="DENN"/>
    <property type="match status" value="1"/>
</dbReference>
<dbReference type="Pfam" id="PF03456">
    <property type="entry name" value="uDENN"/>
    <property type="match status" value="1"/>
</dbReference>
<dbReference type="SMART" id="SM00801">
    <property type="entry name" value="dDENN"/>
    <property type="match status" value="1"/>
</dbReference>
<dbReference type="SMART" id="SM00799">
    <property type="entry name" value="DENN"/>
    <property type="match status" value="1"/>
</dbReference>
<dbReference type="SMART" id="SM00800">
    <property type="entry name" value="uDENN"/>
    <property type="match status" value="1"/>
</dbReference>
<dbReference type="PROSITE" id="PS50211">
    <property type="entry name" value="DENN"/>
    <property type="match status" value="1"/>
</dbReference>
<keyword id="KW-0025">Alternative splicing</keyword>
<keyword id="KW-0963">Cytoplasm</keyword>
<keyword id="KW-0344">Guanine-nucleotide releasing factor</keyword>
<keyword id="KW-1267">Proteomics identification</keyword>
<keyword id="KW-1185">Reference proteome</keyword>
<evidence type="ECO:0000255" key="1">
    <source>
        <dbReference type="PROSITE-ProRule" id="PRU00304"/>
    </source>
</evidence>
<evidence type="ECO:0000269" key="2">
    <source>
    </source>
</evidence>
<evidence type="ECO:0000269" key="3">
    <source>
    </source>
</evidence>
<evidence type="ECO:0000303" key="4">
    <source>
    </source>
</evidence>
<evidence type="ECO:0000305" key="5"/>
<protein>
    <recommendedName>
        <fullName>DENN domain-containing protein 2D</fullName>
    </recommendedName>
</protein>
<proteinExistence type="evidence at protein level"/>
<accession>Q9H6A0</accession>
<accession>Q5T5V6</accession>
<accession>Q9BSU0</accession>
<reference key="1">
    <citation type="journal article" date="2004" name="Nat. Genet.">
        <title>Complete sequencing and characterization of 21,243 full-length human cDNAs.</title>
        <authorList>
            <person name="Ota T."/>
            <person name="Suzuki Y."/>
            <person name="Nishikawa T."/>
            <person name="Otsuki T."/>
            <person name="Sugiyama T."/>
            <person name="Irie R."/>
            <person name="Wakamatsu A."/>
            <person name="Hayashi K."/>
            <person name="Sato H."/>
            <person name="Nagai K."/>
            <person name="Kimura K."/>
            <person name="Makita H."/>
            <person name="Sekine M."/>
            <person name="Obayashi M."/>
            <person name="Nishi T."/>
            <person name="Shibahara T."/>
            <person name="Tanaka T."/>
            <person name="Ishii S."/>
            <person name="Yamamoto J."/>
            <person name="Saito K."/>
            <person name="Kawai Y."/>
            <person name="Isono Y."/>
            <person name="Nakamura Y."/>
            <person name="Nagahari K."/>
            <person name="Murakami K."/>
            <person name="Yasuda T."/>
            <person name="Iwayanagi T."/>
            <person name="Wagatsuma M."/>
            <person name="Shiratori A."/>
            <person name="Sudo H."/>
            <person name="Hosoiri T."/>
            <person name="Kaku Y."/>
            <person name="Kodaira H."/>
            <person name="Kondo H."/>
            <person name="Sugawara M."/>
            <person name="Takahashi M."/>
            <person name="Kanda K."/>
            <person name="Yokoi T."/>
            <person name="Furuya T."/>
            <person name="Kikkawa E."/>
            <person name="Omura Y."/>
            <person name="Abe K."/>
            <person name="Kamihara K."/>
            <person name="Katsuta N."/>
            <person name="Sato K."/>
            <person name="Tanikawa M."/>
            <person name="Yamazaki M."/>
            <person name="Ninomiya K."/>
            <person name="Ishibashi T."/>
            <person name="Yamashita H."/>
            <person name="Murakawa K."/>
            <person name="Fujimori K."/>
            <person name="Tanai H."/>
            <person name="Kimata M."/>
            <person name="Watanabe M."/>
            <person name="Hiraoka S."/>
            <person name="Chiba Y."/>
            <person name="Ishida S."/>
            <person name="Ono Y."/>
            <person name="Takiguchi S."/>
            <person name="Watanabe S."/>
            <person name="Yosida M."/>
            <person name="Hotuta T."/>
            <person name="Kusano J."/>
            <person name="Kanehori K."/>
            <person name="Takahashi-Fujii A."/>
            <person name="Hara H."/>
            <person name="Tanase T.-O."/>
            <person name="Nomura Y."/>
            <person name="Togiya S."/>
            <person name="Komai F."/>
            <person name="Hara R."/>
            <person name="Takeuchi K."/>
            <person name="Arita M."/>
            <person name="Imose N."/>
            <person name="Musashino K."/>
            <person name="Yuuki H."/>
            <person name="Oshima A."/>
            <person name="Sasaki N."/>
            <person name="Aotsuka S."/>
            <person name="Yoshikawa Y."/>
            <person name="Matsunawa H."/>
            <person name="Ichihara T."/>
            <person name="Shiohata N."/>
            <person name="Sano S."/>
            <person name="Moriya S."/>
            <person name="Momiyama H."/>
            <person name="Satoh N."/>
            <person name="Takami S."/>
            <person name="Terashima Y."/>
            <person name="Suzuki O."/>
            <person name="Nakagawa S."/>
            <person name="Senoh A."/>
            <person name="Mizoguchi H."/>
            <person name="Goto Y."/>
            <person name="Shimizu F."/>
            <person name="Wakebe H."/>
            <person name="Hishigaki H."/>
            <person name="Watanabe T."/>
            <person name="Sugiyama A."/>
            <person name="Takemoto M."/>
            <person name="Kawakami B."/>
            <person name="Yamazaki M."/>
            <person name="Watanabe K."/>
            <person name="Kumagai A."/>
            <person name="Itakura S."/>
            <person name="Fukuzumi Y."/>
            <person name="Fujimori Y."/>
            <person name="Komiyama M."/>
            <person name="Tashiro H."/>
            <person name="Tanigami A."/>
            <person name="Fujiwara T."/>
            <person name="Ono T."/>
            <person name="Yamada K."/>
            <person name="Fujii Y."/>
            <person name="Ozaki K."/>
            <person name="Hirao M."/>
            <person name="Ohmori Y."/>
            <person name="Kawabata A."/>
            <person name="Hikiji T."/>
            <person name="Kobatake N."/>
            <person name="Inagaki H."/>
            <person name="Ikema Y."/>
            <person name="Okamoto S."/>
            <person name="Okitani R."/>
            <person name="Kawakami T."/>
            <person name="Noguchi S."/>
            <person name="Itoh T."/>
            <person name="Shigeta K."/>
            <person name="Senba T."/>
            <person name="Matsumura K."/>
            <person name="Nakajima Y."/>
            <person name="Mizuno T."/>
            <person name="Morinaga M."/>
            <person name="Sasaki M."/>
            <person name="Togashi T."/>
            <person name="Oyama M."/>
            <person name="Hata H."/>
            <person name="Watanabe M."/>
            <person name="Komatsu T."/>
            <person name="Mizushima-Sugano J."/>
            <person name="Satoh T."/>
            <person name="Shirai Y."/>
            <person name="Takahashi Y."/>
            <person name="Nakagawa K."/>
            <person name="Okumura K."/>
            <person name="Nagase T."/>
            <person name="Nomura N."/>
            <person name="Kikuchi H."/>
            <person name="Masuho Y."/>
            <person name="Yamashita R."/>
            <person name="Nakai K."/>
            <person name="Yada T."/>
            <person name="Nakamura Y."/>
            <person name="Ohara O."/>
            <person name="Isogai T."/>
            <person name="Sugano S."/>
        </authorList>
    </citation>
    <scope>NUCLEOTIDE SEQUENCE [LARGE SCALE MRNA] (ISOFORM 2)</scope>
</reference>
<reference key="2">
    <citation type="journal article" date="2006" name="Nature">
        <title>The DNA sequence and biological annotation of human chromosome 1.</title>
        <authorList>
            <person name="Gregory S.G."/>
            <person name="Barlow K.F."/>
            <person name="McLay K.E."/>
            <person name="Kaul R."/>
            <person name="Swarbreck D."/>
            <person name="Dunham A."/>
            <person name="Scott C.E."/>
            <person name="Howe K.L."/>
            <person name="Woodfine K."/>
            <person name="Spencer C.C.A."/>
            <person name="Jones M.C."/>
            <person name="Gillson C."/>
            <person name="Searle S."/>
            <person name="Zhou Y."/>
            <person name="Kokocinski F."/>
            <person name="McDonald L."/>
            <person name="Evans R."/>
            <person name="Phillips K."/>
            <person name="Atkinson A."/>
            <person name="Cooper R."/>
            <person name="Jones C."/>
            <person name="Hall R.E."/>
            <person name="Andrews T.D."/>
            <person name="Lloyd C."/>
            <person name="Ainscough R."/>
            <person name="Almeida J.P."/>
            <person name="Ambrose K.D."/>
            <person name="Anderson F."/>
            <person name="Andrew R.W."/>
            <person name="Ashwell R.I.S."/>
            <person name="Aubin K."/>
            <person name="Babbage A.K."/>
            <person name="Bagguley C.L."/>
            <person name="Bailey J."/>
            <person name="Beasley H."/>
            <person name="Bethel G."/>
            <person name="Bird C.P."/>
            <person name="Bray-Allen S."/>
            <person name="Brown J.Y."/>
            <person name="Brown A.J."/>
            <person name="Buckley D."/>
            <person name="Burton J."/>
            <person name="Bye J."/>
            <person name="Carder C."/>
            <person name="Chapman J.C."/>
            <person name="Clark S.Y."/>
            <person name="Clarke G."/>
            <person name="Clee C."/>
            <person name="Cobley V."/>
            <person name="Collier R.E."/>
            <person name="Corby N."/>
            <person name="Coville G.J."/>
            <person name="Davies J."/>
            <person name="Deadman R."/>
            <person name="Dunn M."/>
            <person name="Earthrowl M."/>
            <person name="Ellington A.G."/>
            <person name="Errington H."/>
            <person name="Frankish A."/>
            <person name="Frankland J."/>
            <person name="French L."/>
            <person name="Garner P."/>
            <person name="Garnett J."/>
            <person name="Gay L."/>
            <person name="Ghori M.R.J."/>
            <person name="Gibson R."/>
            <person name="Gilby L.M."/>
            <person name="Gillett W."/>
            <person name="Glithero R.J."/>
            <person name="Grafham D.V."/>
            <person name="Griffiths C."/>
            <person name="Griffiths-Jones S."/>
            <person name="Grocock R."/>
            <person name="Hammond S."/>
            <person name="Harrison E.S.I."/>
            <person name="Hart E."/>
            <person name="Haugen E."/>
            <person name="Heath P.D."/>
            <person name="Holmes S."/>
            <person name="Holt K."/>
            <person name="Howden P.J."/>
            <person name="Hunt A.R."/>
            <person name="Hunt S.E."/>
            <person name="Hunter G."/>
            <person name="Isherwood J."/>
            <person name="James R."/>
            <person name="Johnson C."/>
            <person name="Johnson D."/>
            <person name="Joy A."/>
            <person name="Kay M."/>
            <person name="Kershaw J.K."/>
            <person name="Kibukawa M."/>
            <person name="Kimberley A.M."/>
            <person name="King A."/>
            <person name="Knights A.J."/>
            <person name="Lad H."/>
            <person name="Laird G."/>
            <person name="Lawlor S."/>
            <person name="Leongamornlert D.A."/>
            <person name="Lloyd D.M."/>
            <person name="Loveland J."/>
            <person name="Lovell J."/>
            <person name="Lush M.J."/>
            <person name="Lyne R."/>
            <person name="Martin S."/>
            <person name="Mashreghi-Mohammadi M."/>
            <person name="Matthews L."/>
            <person name="Matthews N.S.W."/>
            <person name="McLaren S."/>
            <person name="Milne S."/>
            <person name="Mistry S."/>
            <person name="Moore M.J.F."/>
            <person name="Nickerson T."/>
            <person name="O'Dell C.N."/>
            <person name="Oliver K."/>
            <person name="Palmeiri A."/>
            <person name="Palmer S.A."/>
            <person name="Parker A."/>
            <person name="Patel D."/>
            <person name="Pearce A.V."/>
            <person name="Peck A.I."/>
            <person name="Pelan S."/>
            <person name="Phelps K."/>
            <person name="Phillimore B.J."/>
            <person name="Plumb R."/>
            <person name="Rajan J."/>
            <person name="Raymond C."/>
            <person name="Rouse G."/>
            <person name="Saenphimmachak C."/>
            <person name="Sehra H.K."/>
            <person name="Sheridan E."/>
            <person name="Shownkeen R."/>
            <person name="Sims S."/>
            <person name="Skuce C.D."/>
            <person name="Smith M."/>
            <person name="Steward C."/>
            <person name="Subramanian S."/>
            <person name="Sycamore N."/>
            <person name="Tracey A."/>
            <person name="Tromans A."/>
            <person name="Van Helmond Z."/>
            <person name="Wall M."/>
            <person name="Wallis J.M."/>
            <person name="White S."/>
            <person name="Whitehead S.L."/>
            <person name="Wilkinson J.E."/>
            <person name="Willey D.L."/>
            <person name="Williams H."/>
            <person name="Wilming L."/>
            <person name="Wray P.W."/>
            <person name="Wu Z."/>
            <person name="Coulson A."/>
            <person name="Vaudin M."/>
            <person name="Sulston J.E."/>
            <person name="Durbin R.M."/>
            <person name="Hubbard T."/>
            <person name="Wooster R."/>
            <person name="Dunham I."/>
            <person name="Carter N.P."/>
            <person name="McVean G."/>
            <person name="Ross M.T."/>
            <person name="Harrow J."/>
            <person name="Olson M.V."/>
            <person name="Beck S."/>
            <person name="Rogers J."/>
            <person name="Bentley D.R."/>
        </authorList>
    </citation>
    <scope>NUCLEOTIDE SEQUENCE [LARGE SCALE GENOMIC DNA]</scope>
</reference>
<reference key="3">
    <citation type="journal article" date="2004" name="Genome Res.">
        <title>The status, quality, and expansion of the NIH full-length cDNA project: the Mammalian Gene Collection (MGC).</title>
        <authorList>
            <consortium name="The MGC Project Team"/>
        </authorList>
    </citation>
    <scope>NUCLEOTIDE SEQUENCE [LARGE SCALE MRNA] (ISOFORM 1)</scope>
    <source>
        <tissue>Placenta</tissue>
    </source>
</reference>
<reference key="4">
    <citation type="journal article" date="2010" name="J. Cell Biol.">
        <title>Family-wide characterization of the DENN domain Rab GDP-GTP exchange factors.</title>
        <authorList>
            <person name="Yoshimura S."/>
            <person name="Gerondopoulos A."/>
            <person name="Linford A."/>
            <person name="Rigden D.J."/>
            <person name="Barr F.A."/>
        </authorList>
    </citation>
    <scope>FUNCTION AS GUANYL-NUCLEOTIDE EXCHANGE FACTOR</scope>
</reference>
<reference key="5">
    <citation type="journal article" date="2013" name="Lung Cancer">
        <title>Suppression of non-small cell lung cancer proliferation and tumorigenicity by DENND2D.</title>
        <authorList>
            <person name="Ling B."/>
            <person name="Zheng H."/>
            <person name="Fu G."/>
            <person name="Yuan J."/>
            <person name="Shi T."/>
            <person name="Chen S."/>
            <person name="Liu Y."/>
            <person name="Liu Y."/>
            <person name="Cao Y."/>
            <person name="Zheng S."/>
            <person name="Guo S."/>
            <person name="Han N."/>
            <person name="Gao Y."/>
            <person name="Cheng S."/>
            <person name="Zhang K."/>
        </authorList>
    </citation>
    <scope>SUBCELLULAR LOCATION</scope>
    <scope>TISSUE SPECIFICITY</scope>
</reference>
<reference key="6">
    <citation type="journal article" date="2014" name="J. Proteomics">
        <title>An enzyme assisted RP-RPLC approach for in-depth analysis of human liver phosphoproteome.</title>
        <authorList>
            <person name="Bian Y."/>
            <person name="Song C."/>
            <person name="Cheng K."/>
            <person name="Dong M."/>
            <person name="Wang F."/>
            <person name="Huang J."/>
            <person name="Sun D."/>
            <person name="Wang L."/>
            <person name="Ye M."/>
            <person name="Zou H."/>
        </authorList>
    </citation>
    <scope>IDENTIFICATION BY MASS SPECTROMETRY [LARGE SCALE ANALYSIS]</scope>
    <source>
        <tissue>Liver</tissue>
    </source>
</reference>
<feature type="chain" id="PRO_0000242686" description="DENN domain-containing protein 2D">
    <location>
        <begin position="1"/>
        <end position="471"/>
    </location>
</feature>
<feature type="domain" description="uDENN" evidence="1">
    <location>
        <begin position="55"/>
        <end position="204"/>
    </location>
</feature>
<feature type="domain" description="cDENN" evidence="1">
    <location>
        <begin position="226"/>
        <end position="359"/>
    </location>
</feature>
<feature type="domain" description="dDENN" evidence="1">
    <location>
        <begin position="361"/>
        <end position="445"/>
    </location>
</feature>
<feature type="splice variant" id="VSP_019471" description="In isoform 2." evidence="4">
    <original>MEGQVVGRVFRLFQRRLLQLRA</original>
    <variation>MDGLGRRLRASLRLKRGHG</variation>
    <location>
        <begin position="1"/>
        <end position="22"/>
    </location>
</feature>
<feature type="sequence variant" id="VAR_050950" description="In dbSNP:rs35742969.">
    <original>S</original>
    <variation>N</variation>
    <location>
        <position position="282"/>
    </location>
</feature>
<feature type="sequence conflict" description="In Ref. 1; BAB15363." evidence="5" ref="1">
    <original>Y</original>
    <variation>H</variation>
    <location>
        <position position="185"/>
    </location>
</feature>
<organism>
    <name type="scientific">Homo sapiens</name>
    <name type="common">Human</name>
    <dbReference type="NCBI Taxonomy" id="9606"/>
    <lineage>
        <taxon>Eukaryota</taxon>
        <taxon>Metazoa</taxon>
        <taxon>Chordata</taxon>
        <taxon>Craniata</taxon>
        <taxon>Vertebrata</taxon>
        <taxon>Euteleostomi</taxon>
        <taxon>Mammalia</taxon>
        <taxon>Eutheria</taxon>
        <taxon>Euarchontoglires</taxon>
        <taxon>Primates</taxon>
        <taxon>Haplorrhini</taxon>
        <taxon>Catarrhini</taxon>
        <taxon>Hominidae</taxon>
        <taxon>Homo</taxon>
    </lineage>
</organism>
<sequence length="471" mass="53672">MEGQVVGRVFRLFQRRLLQLRAGPPQDNSGEALKEPERAQEHSLPNFAGGQHFFEYLLVVSLKKKRSEDDYEPIITYQFPKRENLLRGQQEEEERLLKAIPLFCFPDGNEWASLTEYPRETFSFVLTNVDGSRKIGYCRRLLPAGPGPRLPKVYCIISCIGCFGLFSKILDEVEKRHQISMAVIYPFMQGLREAAFPAPGKTVTLKSFIPDSGTEFISLTRPLDSHLEHVDFSSLLHCLSFEQILQIFASAVLERKIIFLAEGLSTLSQCIHAAAALLYPFSWAHTYIPVVPESLLATVCCPTPFMVGVQMRFQQEVMDSPMEEVLLVNLCEGTFLMSVGDEKDILPPKLQDDILDSLGQGINELKTAEQINEHVSGPFVQFFVKIVGHYASYIKREANGQGHFQERSFCKALTSKTNRRFVKKFVKTQLFSLFIQEAEKSKNPPAGYFQQKILEYEEQKKQKKPREKTVK</sequence>
<name>DEN2D_HUMAN</name>